<feature type="chain" id="PRO_0000452950" description="Probable CoA ligase CCL5">
    <location>
        <begin position="1"/>
        <end position="551"/>
    </location>
</feature>
<feature type="region of interest" description="SBD1" evidence="2">
    <location>
        <begin position="274"/>
        <end position="345"/>
    </location>
</feature>
<feature type="region of interest" description="SBD2" evidence="2">
    <location>
        <begin position="346"/>
        <end position="410"/>
    </location>
</feature>
<feature type="binding site" evidence="3">
    <location>
        <begin position="204"/>
        <end position="212"/>
    </location>
    <ligand>
        <name>ATP</name>
        <dbReference type="ChEBI" id="CHEBI:30616"/>
    </ligand>
</feature>
<feature type="binding site" evidence="3">
    <location>
        <begin position="345"/>
        <end position="350"/>
    </location>
    <ligand>
        <name>ATP</name>
        <dbReference type="ChEBI" id="CHEBI:30616"/>
    </ligand>
</feature>
<feature type="binding site" evidence="3">
    <location>
        <position position="431"/>
    </location>
    <ligand>
        <name>ATP</name>
        <dbReference type="ChEBI" id="CHEBI:30616"/>
    </ligand>
</feature>
<feature type="binding site" evidence="3">
    <location>
        <begin position="443"/>
        <end position="446"/>
    </location>
    <ligand>
        <name>ATP</name>
        <dbReference type="ChEBI" id="CHEBI:30616"/>
    </ligand>
</feature>
<feature type="binding site" evidence="3">
    <location>
        <position position="537"/>
    </location>
    <ligand>
        <name>ATP</name>
        <dbReference type="ChEBI" id="CHEBI:30616"/>
    </ligand>
</feature>
<dbReference type="EC" id="6.2.1.-" evidence="7"/>
<dbReference type="EMBL" id="JQ740207">
    <property type="protein sequence ID" value="AGA17922.1"/>
    <property type="molecule type" value="mRNA"/>
</dbReference>
<dbReference type="SMR" id="M4IQR7"/>
<dbReference type="GO" id="GO:0005829">
    <property type="term" value="C:cytosol"/>
    <property type="evidence" value="ECO:0000250"/>
    <property type="project" value="UniProtKB"/>
</dbReference>
<dbReference type="GO" id="GO:0005777">
    <property type="term" value="C:peroxisome"/>
    <property type="evidence" value="ECO:0007669"/>
    <property type="project" value="TreeGrafter"/>
</dbReference>
<dbReference type="GO" id="GO:0005524">
    <property type="term" value="F:ATP binding"/>
    <property type="evidence" value="ECO:0007669"/>
    <property type="project" value="UniProtKB-KW"/>
</dbReference>
<dbReference type="GO" id="GO:0016405">
    <property type="term" value="F:CoA-ligase activity"/>
    <property type="evidence" value="ECO:0000250"/>
    <property type="project" value="UniProtKB"/>
</dbReference>
<dbReference type="CDD" id="cd05904">
    <property type="entry name" value="4CL"/>
    <property type="match status" value="1"/>
</dbReference>
<dbReference type="FunFam" id="3.30.300.30:FF:000007">
    <property type="entry name" value="4-coumarate--CoA ligase 2"/>
    <property type="match status" value="1"/>
</dbReference>
<dbReference type="FunFam" id="3.40.50.12780:FF:000003">
    <property type="entry name" value="Long-chain-fatty-acid--CoA ligase FadD"/>
    <property type="match status" value="1"/>
</dbReference>
<dbReference type="Gene3D" id="3.30.300.30">
    <property type="match status" value="1"/>
</dbReference>
<dbReference type="Gene3D" id="3.40.50.12780">
    <property type="entry name" value="N-terminal domain of ligase-like"/>
    <property type="match status" value="1"/>
</dbReference>
<dbReference type="InterPro" id="IPR025110">
    <property type="entry name" value="AMP-bd_C"/>
</dbReference>
<dbReference type="InterPro" id="IPR045851">
    <property type="entry name" value="AMP-bd_C_sf"/>
</dbReference>
<dbReference type="InterPro" id="IPR020845">
    <property type="entry name" value="AMP-binding_CS"/>
</dbReference>
<dbReference type="InterPro" id="IPR000873">
    <property type="entry name" value="AMP-dep_synth/lig_dom"/>
</dbReference>
<dbReference type="InterPro" id="IPR042099">
    <property type="entry name" value="ANL_N_sf"/>
</dbReference>
<dbReference type="PANTHER" id="PTHR24096">
    <property type="entry name" value="LONG-CHAIN-FATTY-ACID--COA LIGASE"/>
    <property type="match status" value="1"/>
</dbReference>
<dbReference type="PANTHER" id="PTHR24096:SF413">
    <property type="entry name" value="PEROXISOMAL OPC-8:0-COA LIGASE 1"/>
    <property type="match status" value="1"/>
</dbReference>
<dbReference type="Pfam" id="PF00501">
    <property type="entry name" value="AMP-binding"/>
    <property type="match status" value="1"/>
</dbReference>
<dbReference type="Pfam" id="PF13193">
    <property type="entry name" value="AMP-binding_C"/>
    <property type="match status" value="1"/>
</dbReference>
<dbReference type="SUPFAM" id="SSF56801">
    <property type="entry name" value="Acetyl-CoA synthetase-like"/>
    <property type="match status" value="1"/>
</dbReference>
<dbReference type="PROSITE" id="PS00455">
    <property type="entry name" value="AMP_BINDING"/>
    <property type="match status" value="1"/>
</dbReference>
<proteinExistence type="evidence at transcript level"/>
<reference key="1">
    <citation type="journal article" date="2013" name="Mol. Plant">
        <title>Characterization of the formation of branched short-chain fatty acid:CoAs for bitter acid biosynthesis in hop glandular trichomes.</title>
        <authorList>
            <person name="Xu H."/>
            <person name="Zhang F."/>
            <person name="Liu B."/>
            <person name="Huhman D.V."/>
            <person name="Sumner L.W."/>
            <person name="Dixon R.A."/>
            <person name="Wang G."/>
        </authorList>
    </citation>
    <scope>NUCLEOTIDE SEQUENCE [MRNA]</scope>
    <scope>TISSUE SPECIFICITY</scope>
    <scope>DEVELOPMENTAL STAGE</scope>
    <scope>GENE FAMILY</scope>
    <scope>NOMENCLATURE</scope>
    <source>
        <strain>cv. Nugget</strain>
    </source>
</reference>
<organism>
    <name type="scientific">Humulus lupulus</name>
    <name type="common">European hop</name>
    <dbReference type="NCBI Taxonomy" id="3486"/>
    <lineage>
        <taxon>Eukaryota</taxon>
        <taxon>Viridiplantae</taxon>
        <taxon>Streptophyta</taxon>
        <taxon>Embryophyta</taxon>
        <taxon>Tracheophyta</taxon>
        <taxon>Spermatophyta</taxon>
        <taxon>Magnoliopsida</taxon>
        <taxon>eudicotyledons</taxon>
        <taxon>Gunneridae</taxon>
        <taxon>Pentapetalae</taxon>
        <taxon>rosids</taxon>
        <taxon>fabids</taxon>
        <taxon>Rosales</taxon>
        <taxon>Cannabaceae</taxon>
        <taxon>Humulus</taxon>
    </lineage>
</organism>
<comment type="subcellular location">
    <subcellularLocation>
        <location evidence="1">Cytoplasm</location>
        <location evidence="1">Cytosol</location>
    </subcellularLocation>
</comment>
<comment type="tissue specificity">
    <text evidence="4">Mostly expressed at low levels in glandular trichomes (lupulin glands) after flowering, and, to a lower extent, in stems, leaves, cones and flowers.</text>
</comment>
<comment type="developmental stage">
    <text evidence="4">Accumulates progressively in glandular trichomes (lupulin glands) after flowering.</text>
</comment>
<comment type="domain">
    <text evidence="2">Both substrate-binding domains (SBD1 and SBD2) are involved in the substrate recognition, and are sufficient to confer the substrate specificity.</text>
</comment>
<comment type="similarity">
    <text evidence="6">Belongs to the ATP-dependent AMP-binding enzyme family.</text>
</comment>
<keyword id="KW-0067">ATP-binding</keyword>
<keyword id="KW-0963">Cytoplasm</keyword>
<keyword id="KW-0436">Ligase</keyword>
<keyword id="KW-0547">Nucleotide-binding</keyword>
<evidence type="ECO:0000250" key="1">
    <source>
        <dbReference type="UniProtKB" id="M4IRL4"/>
    </source>
</evidence>
<evidence type="ECO:0000250" key="2">
    <source>
        <dbReference type="UniProtKB" id="Q42524"/>
    </source>
</evidence>
<evidence type="ECO:0000250" key="3">
    <source>
        <dbReference type="UniProtKB" id="Q81G39"/>
    </source>
</evidence>
<evidence type="ECO:0000269" key="4">
    <source>
    </source>
</evidence>
<evidence type="ECO:0000303" key="5">
    <source>
    </source>
</evidence>
<evidence type="ECO:0000305" key="6"/>
<evidence type="ECO:0000305" key="7">
    <source>
    </source>
</evidence>
<name>CCL5_HUMLU</name>
<protein>
    <recommendedName>
        <fullName evidence="7">Probable CoA ligase CCL5</fullName>
        <shortName evidence="5">HlCCL5</shortName>
        <ecNumber evidence="7">6.2.1.-</ecNumber>
    </recommendedName>
</protein>
<sequence>MENSSKAIVDERSGYCKSNSIFYSKREPVQLPQNHSVDVTTFISSRAHHGKIAFIDAATGRHLTFPQLWRAVDSVATCLSAMGIRKGDVILLLSPNSIYFPVVCLAVMSLGAIITTTNPLNTPREIAKQITDSKPVLAFTIPQLVSKIAGSNLPIVIIDDEVKSSLEKTLNIVSSLGEMMRKEPSPNRIGYRVNQEDTATLLYSSGTTGASKGVVSSHKNLIAMVQTILSRFGTEDGEHTFICTVPMFHIYGLAAFAMGLLSSGSTIVILSKFEIHEMLSAIEKYRATYLPLVPPILMALLKNANHIRAKYDLSSLQSVLSGGAPLSKEVIEGFVENYPTVSILQGYGLTESTGIGASTDCLQESRRYGTAGMLSPSMEAKIVNPETGEALSVNRTGELWLRGPTIMKGYFSNEEATSSTIDSEGWLRTGDLCYIDEDGFIFVVDRLKELIKYKGYQVAPAELEALLLSHPEISDAAVIPYPDKEAGQFPMAYVVRKGGSNLSESTVMDFIAKLVAPYKRIRKVAFVASIPKNPSGKILRKDLIKLATSKL</sequence>
<gene>
    <name evidence="5" type="primary">CCL5</name>
</gene>
<accession>M4IQR7</accession>